<feature type="signal peptide" evidence="2">
    <location>
        <begin position="1"/>
        <end position="23"/>
    </location>
</feature>
<feature type="chain" id="PRO_0000299145" description="UDP-glucuronosyltransferase 2A3">
    <location>
        <begin position="24"/>
        <end position="530"/>
    </location>
</feature>
<feature type="topological domain" description="Extracellular" evidence="2">
    <location>
        <begin position="24"/>
        <end position="494"/>
    </location>
</feature>
<feature type="transmembrane region" description="Helical" evidence="2">
    <location>
        <begin position="495"/>
        <end position="515"/>
    </location>
</feature>
<feature type="topological domain" description="Cytoplasmic" evidence="2">
    <location>
        <begin position="516"/>
        <end position="530"/>
    </location>
</feature>
<feature type="glycosylation site" description="N-linked (GlcNAc...) asparagine" evidence="2">
    <location>
        <position position="316"/>
    </location>
</feature>
<comment type="function">
    <text evidence="1">UDP-glucuronosyltransferases catalyze phase II biotransformation reactions in which lipophilic substrates are conjugated with glucuronic acid to increase water solubility and enhance excretion. They are of major importance in the conjugation and subsequent elimination of potentially toxic xenobiotics and endogenous compounds (By similarity).</text>
</comment>
<comment type="catalytic activity">
    <reaction>
        <text>glucuronate acceptor + UDP-alpha-D-glucuronate = acceptor beta-D-glucuronoside + UDP + H(+)</text>
        <dbReference type="Rhea" id="RHEA:21032"/>
        <dbReference type="ChEBI" id="CHEBI:15378"/>
        <dbReference type="ChEBI" id="CHEBI:58052"/>
        <dbReference type="ChEBI" id="CHEBI:58223"/>
        <dbReference type="ChEBI" id="CHEBI:132367"/>
        <dbReference type="ChEBI" id="CHEBI:132368"/>
        <dbReference type="EC" id="2.4.1.17"/>
    </reaction>
</comment>
<comment type="subcellular location">
    <subcellularLocation>
        <location evidence="4">Membrane</location>
        <topology evidence="4">Single-pass type I membrane protein</topology>
    </subcellularLocation>
</comment>
<comment type="tissue specificity">
    <text evidence="3">Specifically expressed in liver and small intestine.</text>
</comment>
<comment type="induction">
    <text evidence="3">Up-regulated in kidney and liver following in utero morphine treatment.</text>
</comment>
<comment type="similarity">
    <text evidence="4">Belongs to the UDP-glycosyltransferase family.</text>
</comment>
<protein>
    <recommendedName>
        <fullName>UDP-glucuronosyltransferase 2A3</fullName>
        <shortName>UDPGT 2A3</shortName>
        <ecNumber>2.4.1.17</ecNumber>
    </recommendedName>
</protein>
<proteinExistence type="evidence at transcript level"/>
<accession>Q9R110</accession>
<sequence length="530" mass="59895">MAPGKLASAVLLLLLCCAGSGFCGKVLVWPCEMSHWLNLKTLLEELVKRGHEVTVLTLSNNLFIDYNRHPAFNFEVIPVPTDKNMSENILNEFIELAVNVMPTMPLWQSGKLLQQFFVQITEDLGLNCRNTVYNQSLMKKLRDSKYDVLVTDPVIPCGELVAEMLGVPFVNMLKFSMGHTIEKYCGQLPAPPSYVPVPLGGLTTRMTFMERVKNMVFSVLFDFWIQQYDYKFWDQFYSEALGRPTTLCEIMGKAEIWLIRTYWDFEFPRPYLPNFEFVGGLHCKPAKPLPKEMEEFVQSSGEDGVVVFSLGSMVKNLTEEKANLIASALAQIPQKVLWRYKGKKPATLGPNTRLFDWIPQNDLLGHPKTKAFITHGGSNGIYEAIYHGVPMVGMPIFSDQPDNLAGMKAKGAAVEVNMNTMTSADLLGALRTVINDPTYKENAMKLSRIHHDQPVKPLDRAAFWVEFVMHHKGAKHLRVAAHDLSWFQYHSLDVIGFLLACVASAILLVTKCCLFSFQNFIKIGKRIKKE</sequence>
<gene>
    <name type="primary">UGT2A3</name>
</gene>
<reference key="1">
    <citation type="journal article" date="1999" name="Mol. Genet. Metab.">
        <title>Morphine regulation of a novel uridine diphosphate glucuronosyl-transferase in guinea pig pups following in utero exposure.</title>
        <authorList>
            <person name="Smith S.A."/>
            <person name="Nagalla S.R."/>
            <person name="Andrews D.P."/>
            <person name="Olsen G.D."/>
        </authorList>
    </citation>
    <scope>NUCLEOTIDE SEQUENCE [MRNA]</scope>
    <scope>TISSUE SPECIFICITY</scope>
    <scope>INDUCTION</scope>
    <source>
        <strain>Hartley</strain>
        <tissue>Liver</tissue>
    </source>
</reference>
<name>UD2A3_CAVPO</name>
<keyword id="KW-0325">Glycoprotein</keyword>
<keyword id="KW-0328">Glycosyltransferase</keyword>
<keyword id="KW-0472">Membrane</keyword>
<keyword id="KW-1185">Reference proteome</keyword>
<keyword id="KW-0732">Signal</keyword>
<keyword id="KW-0808">Transferase</keyword>
<keyword id="KW-0812">Transmembrane</keyword>
<keyword id="KW-1133">Transmembrane helix</keyword>
<organism>
    <name type="scientific">Cavia porcellus</name>
    <name type="common">Guinea pig</name>
    <dbReference type="NCBI Taxonomy" id="10141"/>
    <lineage>
        <taxon>Eukaryota</taxon>
        <taxon>Metazoa</taxon>
        <taxon>Chordata</taxon>
        <taxon>Craniata</taxon>
        <taxon>Vertebrata</taxon>
        <taxon>Euteleostomi</taxon>
        <taxon>Mammalia</taxon>
        <taxon>Eutheria</taxon>
        <taxon>Euarchontoglires</taxon>
        <taxon>Glires</taxon>
        <taxon>Rodentia</taxon>
        <taxon>Hystricomorpha</taxon>
        <taxon>Caviidae</taxon>
        <taxon>Cavia</taxon>
    </lineage>
</organism>
<dbReference type="EC" id="2.4.1.17"/>
<dbReference type="EMBL" id="AF175221">
    <property type="protein sequence ID" value="AAD51732.1"/>
    <property type="molecule type" value="mRNA"/>
</dbReference>
<dbReference type="RefSeq" id="NP_001166497.1">
    <property type="nucleotide sequence ID" value="NM_001173026.1"/>
</dbReference>
<dbReference type="SMR" id="Q9R110"/>
<dbReference type="FunCoup" id="Q9R110">
    <property type="interactions" value="304"/>
</dbReference>
<dbReference type="STRING" id="10141.ENSCPOP00000019647"/>
<dbReference type="CAZy" id="GT1">
    <property type="family name" value="Glycosyltransferase Family 1"/>
</dbReference>
<dbReference type="GlyCosmos" id="Q9R110">
    <property type="glycosylation" value="1 site, No reported glycans"/>
</dbReference>
<dbReference type="Ensembl" id="ENSCPOT00000023420.2">
    <property type="protein sequence ID" value="ENSCPOP00000019647.1"/>
    <property type="gene ID" value="ENSCPOG00000010848.4"/>
</dbReference>
<dbReference type="GeneID" id="100135631"/>
<dbReference type="KEGG" id="cpoc:100135631"/>
<dbReference type="VEuPathDB" id="HostDB:ENSCPOG00000010848"/>
<dbReference type="eggNOG" id="KOG1192">
    <property type="taxonomic scope" value="Eukaryota"/>
</dbReference>
<dbReference type="GeneTree" id="ENSGT00940000162432"/>
<dbReference type="HOGENOM" id="CLU_012949_0_2_1"/>
<dbReference type="InParanoid" id="Q9R110"/>
<dbReference type="OMA" id="MAIMLDF"/>
<dbReference type="OrthoDB" id="5835829at2759"/>
<dbReference type="TreeFam" id="TF315472"/>
<dbReference type="Proteomes" id="UP000005447">
    <property type="component" value="Unassembled WGS sequence"/>
</dbReference>
<dbReference type="Bgee" id="ENSCPOG00000010848">
    <property type="expression patterns" value="Expressed in liver"/>
</dbReference>
<dbReference type="GO" id="GO:0016020">
    <property type="term" value="C:membrane"/>
    <property type="evidence" value="ECO:0007669"/>
    <property type="project" value="UniProtKB-SubCell"/>
</dbReference>
<dbReference type="GO" id="GO:0015020">
    <property type="term" value="F:glucuronosyltransferase activity"/>
    <property type="evidence" value="ECO:0007669"/>
    <property type="project" value="UniProtKB-EC"/>
</dbReference>
<dbReference type="CDD" id="cd03784">
    <property type="entry name" value="GT1_Gtf-like"/>
    <property type="match status" value="1"/>
</dbReference>
<dbReference type="FunFam" id="3.40.50.2000:FF:000001">
    <property type="entry name" value="UDP-glucuronosyltransferase"/>
    <property type="match status" value="1"/>
</dbReference>
<dbReference type="FunFam" id="3.40.50.2000:FF:000081">
    <property type="entry name" value="UDP-glucuronosyltransferase 2A2"/>
    <property type="match status" value="1"/>
</dbReference>
<dbReference type="Gene3D" id="3.40.50.2000">
    <property type="entry name" value="Glycogen Phosphorylase B"/>
    <property type="match status" value="2"/>
</dbReference>
<dbReference type="InterPro" id="IPR050271">
    <property type="entry name" value="UDP-glycosyltransferase"/>
</dbReference>
<dbReference type="InterPro" id="IPR002213">
    <property type="entry name" value="UDP_glucos_trans"/>
</dbReference>
<dbReference type="InterPro" id="IPR035595">
    <property type="entry name" value="UDP_glycos_trans_CS"/>
</dbReference>
<dbReference type="PANTHER" id="PTHR48043">
    <property type="entry name" value="EG:EG0003.4 PROTEIN-RELATED"/>
    <property type="match status" value="1"/>
</dbReference>
<dbReference type="PANTHER" id="PTHR48043:SF137">
    <property type="entry name" value="UDP-GLUCURONOSYLTRANSFERASE 2A3"/>
    <property type="match status" value="1"/>
</dbReference>
<dbReference type="Pfam" id="PF00201">
    <property type="entry name" value="UDPGT"/>
    <property type="match status" value="1"/>
</dbReference>
<dbReference type="SUPFAM" id="SSF53756">
    <property type="entry name" value="UDP-Glycosyltransferase/glycogen phosphorylase"/>
    <property type="match status" value="1"/>
</dbReference>
<dbReference type="PROSITE" id="PS00375">
    <property type="entry name" value="UDPGT"/>
    <property type="match status" value="1"/>
</dbReference>
<evidence type="ECO:0000250" key="1"/>
<evidence type="ECO:0000255" key="2"/>
<evidence type="ECO:0000269" key="3">
    <source>
    </source>
</evidence>
<evidence type="ECO:0000305" key="4"/>